<sequence>MKTSQNLVSVEQFSNQDVMAYLKLAQAFKNGKTVQLSQPTFAMNLFFENSTRTHTSFEMAERRLGLQVIPFDPKTSSVTKGESLLDTLKTIEAIGVNLAVVRHPRDRYYQPLLDAGFDMSLINAGDGSGQHPSQSLLDMLTIYEEFGHFDGLKIAIVGDLAHSRVARSNMALLTQLGAQVYFGGPKEWYGRDFEAYGEYQTMDQLVATMDVMMLLRVQHERLSQVNNQTFDASAYHQQYGLTAERAARMPKHAIIMHPAPVNRGVELASDLVEAPQSRIFQQMTNGVYIRMAMVASVLAHQGLISATQVEV</sequence>
<comment type="function">
    <text evidence="1">Catalyzes the condensation of carbamoyl phosphate and aspartate to form carbamoyl aspartate and inorganic phosphate, the committed step in the de novo pyrimidine nucleotide biosynthesis pathway.</text>
</comment>
<comment type="catalytic activity">
    <reaction evidence="1">
        <text>carbamoyl phosphate + L-aspartate = N-carbamoyl-L-aspartate + phosphate + H(+)</text>
        <dbReference type="Rhea" id="RHEA:20013"/>
        <dbReference type="ChEBI" id="CHEBI:15378"/>
        <dbReference type="ChEBI" id="CHEBI:29991"/>
        <dbReference type="ChEBI" id="CHEBI:32814"/>
        <dbReference type="ChEBI" id="CHEBI:43474"/>
        <dbReference type="ChEBI" id="CHEBI:58228"/>
        <dbReference type="EC" id="2.1.3.2"/>
    </reaction>
</comment>
<comment type="pathway">
    <text evidence="1">Pyrimidine metabolism; UMP biosynthesis via de novo pathway; (S)-dihydroorotate from bicarbonate: step 2/3.</text>
</comment>
<comment type="subunit">
    <text evidence="1">Heterododecamer (2C3:3R2) of six catalytic PyrB chains organized as two trimers (C3), and six regulatory PyrI chains organized as three dimers (R2).</text>
</comment>
<comment type="similarity">
    <text evidence="1 2">Belongs to the aspartate/ornithine carbamoyltransferase superfamily. ATCase family.</text>
</comment>
<dbReference type="EC" id="2.1.3.2" evidence="1"/>
<dbReference type="EMBL" id="Z54240">
    <property type="protein sequence ID" value="CAA91002.1"/>
    <property type="molecule type" value="Genomic_DNA"/>
</dbReference>
<dbReference type="EMBL" id="AL935263">
    <property type="protein sequence ID" value="CCC79824.1"/>
    <property type="molecule type" value="Genomic_DNA"/>
</dbReference>
<dbReference type="RefSeq" id="WP_011101888.1">
    <property type="nucleotide sequence ID" value="NC_004567.2"/>
</dbReference>
<dbReference type="RefSeq" id="YP_004890338.1">
    <property type="nucleotide sequence ID" value="NC_004567.2"/>
</dbReference>
<dbReference type="SMR" id="P77883"/>
<dbReference type="STRING" id="220668.lp_2703"/>
<dbReference type="EnsemblBacteria" id="CCC79824">
    <property type="protein sequence ID" value="CCC79824"/>
    <property type="gene ID" value="lp_2703"/>
</dbReference>
<dbReference type="KEGG" id="lpl:lp_2703"/>
<dbReference type="PATRIC" id="fig|220668.9.peg.2263"/>
<dbReference type="eggNOG" id="COG0540">
    <property type="taxonomic scope" value="Bacteria"/>
</dbReference>
<dbReference type="HOGENOM" id="CLU_043846_2_1_9"/>
<dbReference type="OrthoDB" id="9774690at2"/>
<dbReference type="PhylomeDB" id="P77883"/>
<dbReference type="UniPathway" id="UPA00070">
    <property type="reaction ID" value="UER00116"/>
</dbReference>
<dbReference type="Proteomes" id="UP000000432">
    <property type="component" value="Chromosome"/>
</dbReference>
<dbReference type="GO" id="GO:0005829">
    <property type="term" value="C:cytosol"/>
    <property type="evidence" value="ECO:0007669"/>
    <property type="project" value="TreeGrafter"/>
</dbReference>
<dbReference type="GO" id="GO:0016597">
    <property type="term" value="F:amino acid binding"/>
    <property type="evidence" value="ECO:0007669"/>
    <property type="project" value="InterPro"/>
</dbReference>
<dbReference type="GO" id="GO:0004070">
    <property type="term" value="F:aspartate carbamoyltransferase activity"/>
    <property type="evidence" value="ECO:0007669"/>
    <property type="project" value="UniProtKB-UniRule"/>
</dbReference>
<dbReference type="GO" id="GO:0006207">
    <property type="term" value="P:'de novo' pyrimidine nucleobase biosynthetic process"/>
    <property type="evidence" value="ECO:0007669"/>
    <property type="project" value="InterPro"/>
</dbReference>
<dbReference type="GO" id="GO:0044205">
    <property type="term" value="P:'de novo' UMP biosynthetic process"/>
    <property type="evidence" value="ECO:0007669"/>
    <property type="project" value="UniProtKB-UniRule"/>
</dbReference>
<dbReference type="GO" id="GO:0006520">
    <property type="term" value="P:amino acid metabolic process"/>
    <property type="evidence" value="ECO:0007669"/>
    <property type="project" value="InterPro"/>
</dbReference>
<dbReference type="FunFam" id="3.40.50.1370:FF:000011">
    <property type="entry name" value="Aspartate carbamoyltransferase"/>
    <property type="match status" value="1"/>
</dbReference>
<dbReference type="Gene3D" id="3.40.50.1370">
    <property type="entry name" value="Aspartate/ornithine carbamoyltransferase"/>
    <property type="match status" value="2"/>
</dbReference>
<dbReference type="HAMAP" id="MF_00001">
    <property type="entry name" value="Asp_carb_tr"/>
    <property type="match status" value="1"/>
</dbReference>
<dbReference type="InterPro" id="IPR006132">
    <property type="entry name" value="Asp/Orn_carbamoyltranf_P-bd"/>
</dbReference>
<dbReference type="InterPro" id="IPR006130">
    <property type="entry name" value="Asp/Orn_carbamoylTrfase"/>
</dbReference>
<dbReference type="InterPro" id="IPR036901">
    <property type="entry name" value="Asp/Orn_carbamoylTrfase_sf"/>
</dbReference>
<dbReference type="InterPro" id="IPR002082">
    <property type="entry name" value="Asp_carbamoyltransf"/>
</dbReference>
<dbReference type="InterPro" id="IPR006131">
    <property type="entry name" value="Asp_carbamoyltransf_Asp/Orn-bd"/>
</dbReference>
<dbReference type="NCBIfam" id="TIGR00670">
    <property type="entry name" value="asp_carb_tr"/>
    <property type="match status" value="1"/>
</dbReference>
<dbReference type="NCBIfam" id="NF002032">
    <property type="entry name" value="PRK00856.1"/>
    <property type="match status" value="1"/>
</dbReference>
<dbReference type="PANTHER" id="PTHR45753:SF6">
    <property type="entry name" value="ASPARTATE CARBAMOYLTRANSFERASE"/>
    <property type="match status" value="1"/>
</dbReference>
<dbReference type="PANTHER" id="PTHR45753">
    <property type="entry name" value="ORNITHINE CARBAMOYLTRANSFERASE, MITOCHONDRIAL"/>
    <property type="match status" value="1"/>
</dbReference>
<dbReference type="Pfam" id="PF00185">
    <property type="entry name" value="OTCace"/>
    <property type="match status" value="1"/>
</dbReference>
<dbReference type="Pfam" id="PF02729">
    <property type="entry name" value="OTCace_N"/>
    <property type="match status" value="1"/>
</dbReference>
<dbReference type="PRINTS" id="PR00100">
    <property type="entry name" value="AOTCASE"/>
</dbReference>
<dbReference type="PRINTS" id="PR00101">
    <property type="entry name" value="ATCASE"/>
</dbReference>
<dbReference type="SUPFAM" id="SSF53671">
    <property type="entry name" value="Aspartate/ornithine carbamoyltransferase"/>
    <property type="match status" value="1"/>
</dbReference>
<dbReference type="PROSITE" id="PS00097">
    <property type="entry name" value="CARBAMOYLTRANSFERASE"/>
    <property type="match status" value="1"/>
</dbReference>
<feature type="chain" id="PRO_0000113148" description="Aspartate carbamoyltransferase catalytic subunit">
    <location>
        <begin position="1"/>
        <end position="311"/>
    </location>
</feature>
<feature type="binding site" evidence="1">
    <location>
        <position position="52"/>
    </location>
    <ligand>
        <name>carbamoyl phosphate</name>
        <dbReference type="ChEBI" id="CHEBI:58228"/>
    </ligand>
</feature>
<feature type="binding site" evidence="1">
    <location>
        <position position="53"/>
    </location>
    <ligand>
        <name>carbamoyl phosphate</name>
        <dbReference type="ChEBI" id="CHEBI:58228"/>
    </ligand>
</feature>
<feature type="binding site" evidence="1">
    <location>
        <position position="80"/>
    </location>
    <ligand>
        <name>L-aspartate</name>
        <dbReference type="ChEBI" id="CHEBI:29991"/>
    </ligand>
</feature>
<feature type="binding site" evidence="1">
    <location>
        <position position="102"/>
    </location>
    <ligand>
        <name>carbamoyl phosphate</name>
        <dbReference type="ChEBI" id="CHEBI:58228"/>
    </ligand>
</feature>
<feature type="binding site" evidence="1">
    <location>
        <position position="131"/>
    </location>
    <ligand>
        <name>carbamoyl phosphate</name>
        <dbReference type="ChEBI" id="CHEBI:58228"/>
    </ligand>
</feature>
<feature type="binding site" evidence="1">
    <location>
        <position position="134"/>
    </location>
    <ligand>
        <name>carbamoyl phosphate</name>
        <dbReference type="ChEBI" id="CHEBI:58228"/>
    </ligand>
</feature>
<feature type="binding site" evidence="1">
    <location>
        <position position="164"/>
    </location>
    <ligand>
        <name>L-aspartate</name>
        <dbReference type="ChEBI" id="CHEBI:29991"/>
    </ligand>
</feature>
<feature type="binding site" evidence="1">
    <location>
        <position position="216"/>
    </location>
    <ligand>
        <name>L-aspartate</name>
        <dbReference type="ChEBI" id="CHEBI:29991"/>
    </ligand>
</feature>
<feature type="binding site" evidence="1">
    <location>
        <position position="259"/>
    </location>
    <ligand>
        <name>carbamoyl phosphate</name>
        <dbReference type="ChEBI" id="CHEBI:58228"/>
    </ligand>
</feature>
<feature type="binding site" evidence="1">
    <location>
        <position position="260"/>
    </location>
    <ligand>
        <name>carbamoyl phosphate</name>
        <dbReference type="ChEBI" id="CHEBI:58228"/>
    </ligand>
</feature>
<evidence type="ECO:0000255" key="1">
    <source>
        <dbReference type="HAMAP-Rule" id="MF_00001"/>
    </source>
</evidence>
<evidence type="ECO:0000305" key="2"/>
<gene>
    <name evidence="1" type="primary">pyrB</name>
    <name type="ordered locus">lp_2703</name>
</gene>
<name>PYRB_LACPL</name>
<reference key="1">
    <citation type="journal article" date="1996" name="Gene">
        <title>Structure and organisation of the pyrimidine biosynthesis pathway genes in Lactobacillus plantarum: a PCR strategy for sequencing without cloning.</title>
        <authorList>
            <person name="Elagoez A."/>
            <person name="Abdi A."/>
            <person name="Hubert J.-C."/>
            <person name="Kammerer B."/>
        </authorList>
    </citation>
    <scope>NUCLEOTIDE SEQUENCE [GENOMIC DNA]</scope>
    <source>
        <strain>ATCC 8014 / CCM 1904 / DSM 20205 / NCDO 82 / NCIB 6376</strain>
    </source>
</reference>
<reference key="2">
    <citation type="journal article" date="2003" name="Proc. Natl. Acad. Sci. U.S.A.">
        <title>Complete genome sequence of Lactobacillus plantarum WCFS1.</title>
        <authorList>
            <person name="Kleerebezem M."/>
            <person name="Boekhorst J."/>
            <person name="van Kranenburg R."/>
            <person name="Molenaar D."/>
            <person name="Kuipers O.P."/>
            <person name="Leer R."/>
            <person name="Tarchini R."/>
            <person name="Peters S.A."/>
            <person name="Sandbrink H.M."/>
            <person name="Fiers M.W.E.J."/>
            <person name="Stiekema W."/>
            <person name="Klein Lankhorst R.M."/>
            <person name="Bron P.A."/>
            <person name="Hoffer S.M."/>
            <person name="Nierop Groot M.N."/>
            <person name="Kerkhoven R."/>
            <person name="De Vries M."/>
            <person name="Ursing B."/>
            <person name="De Vos W.M."/>
            <person name="Siezen R.J."/>
        </authorList>
    </citation>
    <scope>NUCLEOTIDE SEQUENCE [LARGE SCALE GENOMIC DNA]</scope>
    <source>
        <strain>ATCC BAA-793 / NCIMB 8826 / WCFS1</strain>
    </source>
</reference>
<reference key="3">
    <citation type="journal article" date="2012" name="J. Bacteriol.">
        <title>Complete resequencing and reannotation of the Lactobacillus plantarum WCFS1 genome.</title>
        <authorList>
            <person name="Siezen R.J."/>
            <person name="Francke C."/>
            <person name="Renckens B."/>
            <person name="Boekhorst J."/>
            <person name="Wels M."/>
            <person name="Kleerebezem M."/>
            <person name="van Hijum S.A."/>
        </authorList>
    </citation>
    <scope>NUCLEOTIDE SEQUENCE [LARGE SCALE GENOMIC DNA]</scope>
    <scope>GENOME REANNOTATION</scope>
    <source>
        <strain>ATCC BAA-793 / NCIMB 8826 / WCFS1</strain>
    </source>
</reference>
<protein>
    <recommendedName>
        <fullName evidence="1">Aspartate carbamoyltransferase catalytic subunit</fullName>
        <ecNumber evidence="1">2.1.3.2</ecNumber>
    </recommendedName>
    <alternativeName>
        <fullName evidence="1">Aspartate transcarbamylase</fullName>
        <shortName evidence="1">ATCase</shortName>
    </alternativeName>
</protein>
<keyword id="KW-0665">Pyrimidine biosynthesis</keyword>
<keyword id="KW-1185">Reference proteome</keyword>
<keyword id="KW-0808">Transferase</keyword>
<organism>
    <name type="scientific">Lactiplantibacillus plantarum (strain ATCC BAA-793 / NCIMB 8826 / WCFS1)</name>
    <name type="common">Lactobacillus plantarum</name>
    <dbReference type="NCBI Taxonomy" id="220668"/>
    <lineage>
        <taxon>Bacteria</taxon>
        <taxon>Bacillati</taxon>
        <taxon>Bacillota</taxon>
        <taxon>Bacilli</taxon>
        <taxon>Lactobacillales</taxon>
        <taxon>Lactobacillaceae</taxon>
        <taxon>Lactiplantibacillus</taxon>
    </lineage>
</organism>
<proteinExistence type="inferred from homology"/>
<accession>P77883</accession>
<accession>F9URI5</accession>